<reference key="1">
    <citation type="journal article" date="2001" name="Genome Res.">
        <title>The complete genome sequence of the lactic acid bacterium Lactococcus lactis ssp. lactis IL1403.</title>
        <authorList>
            <person name="Bolotin A."/>
            <person name="Wincker P."/>
            <person name="Mauger S."/>
            <person name="Jaillon O."/>
            <person name="Malarme K."/>
            <person name="Weissenbach J."/>
            <person name="Ehrlich S.D."/>
            <person name="Sorokin A."/>
        </authorList>
    </citation>
    <scope>NUCLEOTIDE SEQUENCE [LARGE SCALE GENOMIC DNA]</scope>
    <source>
        <strain>IL1403</strain>
    </source>
</reference>
<comment type="function">
    <text evidence="1">Catalyzes the formation of N(4)-acetylcytidine (ac(4)C) at the wobble position of elongator tRNA(Met), using acetate and ATP as substrates. First activates an acetate ion to form acetyladenylate (Ac-AMP) and then transfers the acetyl group to tRNA to form ac(4)C34.</text>
</comment>
<comment type="catalytic activity">
    <reaction evidence="1">
        <text>cytidine(34) in elongator tRNA(Met) + acetate + ATP = N(4)-acetylcytidine(34) in elongator tRNA(Met) + AMP + diphosphate</text>
        <dbReference type="Rhea" id="RHEA:58144"/>
        <dbReference type="Rhea" id="RHEA-COMP:10693"/>
        <dbReference type="Rhea" id="RHEA-COMP:10694"/>
        <dbReference type="ChEBI" id="CHEBI:30089"/>
        <dbReference type="ChEBI" id="CHEBI:30616"/>
        <dbReference type="ChEBI" id="CHEBI:33019"/>
        <dbReference type="ChEBI" id="CHEBI:74900"/>
        <dbReference type="ChEBI" id="CHEBI:82748"/>
        <dbReference type="ChEBI" id="CHEBI:456215"/>
    </reaction>
</comment>
<comment type="subcellular location">
    <subcellularLocation>
        <location evidence="1">Cytoplasm</location>
    </subcellularLocation>
</comment>
<comment type="similarity">
    <text evidence="1">Belongs to the TmcAL family.</text>
</comment>
<keyword id="KW-0067">ATP-binding</keyword>
<keyword id="KW-0963">Cytoplasm</keyword>
<keyword id="KW-0436">Ligase</keyword>
<keyword id="KW-0547">Nucleotide-binding</keyword>
<keyword id="KW-1185">Reference proteome</keyword>
<keyword id="KW-0694">RNA-binding</keyword>
<keyword id="KW-0819">tRNA processing</keyword>
<keyword id="KW-0820">tRNA-binding</keyword>
<gene>
    <name evidence="1" type="primary">tmcAL</name>
    <name type="synonym">yccL</name>
    <name type="ordered locus">LL0230</name>
    <name type="ORF">L29477</name>
</gene>
<evidence type="ECO:0000255" key="1">
    <source>
        <dbReference type="HAMAP-Rule" id="MF_01539"/>
    </source>
</evidence>
<name>TMCAL_LACLA</name>
<dbReference type="EC" id="6.3.4.-" evidence="1"/>
<dbReference type="EMBL" id="AE005176">
    <property type="protein sequence ID" value="AAK04328.1"/>
    <property type="molecule type" value="Genomic_DNA"/>
</dbReference>
<dbReference type="PIR" id="F86653">
    <property type="entry name" value="F86653"/>
</dbReference>
<dbReference type="RefSeq" id="NP_266386.1">
    <property type="nucleotide sequence ID" value="NC_002662.1"/>
</dbReference>
<dbReference type="RefSeq" id="WP_003129834.1">
    <property type="nucleotide sequence ID" value="NC_002662.1"/>
</dbReference>
<dbReference type="SMR" id="Q9CIX6"/>
<dbReference type="PaxDb" id="272623-L29477"/>
<dbReference type="EnsemblBacteria" id="AAK04328">
    <property type="protein sequence ID" value="AAK04328"/>
    <property type="gene ID" value="L29477"/>
</dbReference>
<dbReference type="KEGG" id="lla:L29477"/>
<dbReference type="PATRIC" id="fig|272623.7.peg.252"/>
<dbReference type="eggNOG" id="COG1323">
    <property type="taxonomic scope" value="Bacteria"/>
</dbReference>
<dbReference type="HOGENOM" id="CLU_038915_0_2_9"/>
<dbReference type="OrthoDB" id="9769796at2"/>
<dbReference type="Proteomes" id="UP000002196">
    <property type="component" value="Chromosome"/>
</dbReference>
<dbReference type="GO" id="GO:0005737">
    <property type="term" value="C:cytoplasm"/>
    <property type="evidence" value="ECO:0007669"/>
    <property type="project" value="UniProtKB-SubCell"/>
</dbReference>
<dbReference type="GO" id="GO:0005524">
    <property type="term" value="F:ATP binding"/>
    <property type="evidence" value="ECO:0007669"/>
    <property type="project" value="UniProtKB-KW"/>
</dbReference>
<dbReference type="GO" id="GO:0016879">
    <property type="term" value="F:ligase activity, forming carbon-nitrogen bonds"/>
    <property type="evidence" value="ECO:0007669"/>
    <property type="project" value="UniProtKB-UniRule"/>
</dbReference>
<dbReference type="GO" id="GO:0000049">
    <property type="term" value="F:tRNA binding"/>
    <property type="evidence" value="ECO:0007669"/>
    <property type="project" value="UniProtKB-KW"/>
</dbReference>
<dbReference type="GO" id="GO:0006400">
    <property type="term" value="P:tRNA modification"/>
    <property type="evidence" value="ECO:0007669"/>
    <property type="project" value="UniProtKB-UniRule"/>
</dbReference>
<dbReference type="Gene3D" id="3.40.50.620">
    <property type="entry name" value="HUPs"/>
    <property type="match status" value="1"/>
</dbReference>
<dbReference type="HAMAP" id="MF_01539">
    <property type="entry name" value="TmcAL"/>
    <property type="match status" value="1"/>
</dbReference>
<dbReference type="InterPro" id="IPR014729">
    <property type="entry name" value="Rossmann-like_a/b/a_fold"/>
</dbReference>
<dbReference type="InterPro" id="IPR008513">
    <property type="entry name" value="tRNA(Met)_cyd_acetate_ligase"/>
</dbReference>
<dbReference type="NCBIfam" id="NF010191">
    <property type="entry name" value="PRK13670.1"/>
    <property type="match status" value="1"/>
</dbReference>
<dbReference type="PANTHER" id="PTHR37825">
    <property type="entry name" value="TRNA(MET) CYTIDINE ACETATE LIGASE"/>
    <property type="match status" value="1"/>
</dbReference>
<dbReference type="PANTHER" id="PTHR37825:SF1">
    <property type="entry name" value="TRNA(MET) CYTIDINE ACETATE LIGASE"/>
    <property type="match status" value="1"/>
</dbReference>
<dbReference type="Pfam" id="PF05636">
    <property type="entry name" value="HIGH_NTase1"/>
    <property type="match status" value="1"/>
</dbReference>
<dbReference type="SUPFAM" id="SSF52374">
    <property type="entry name" value="Nucleotidylyl transferase"/>
    <property type="match status" value="1"/>
</dbReference>
<sequence length="389" mass="43912">MNKITGIIAEFNPFHKGHEYLLNQIEGIKIVAMSGNWMQRGEPAIFDKWTRAQMALACGADLVVELPVTVSAQAADFFASGAVDILKNLGITDLAFGSESAIDYNEIADIYEKRGEEMESYIQSLADQLSYPEKTQKMWQHFTGIEFDGNTPNHVLALAYAKAAAGKQINLQAIKRVGKFHSLELTEGFASATALRQELFSLTERQNLLTEQTNQSVSNKLVLTDLSAIKNHVPSAILAAYASPKTNWAAYFPLLQYKIRVDEHLENIFQVNQELSVRLKKAVKSAKNFDELVEQVYTKRYTKARVRRLLTYILLNIPKQFDLPEQIHVLGFSKTGQEILAQNRGKIISKIGQNPWDNLTQKADEIYQLGNVQFEEQNFGRKPIRSSIR</sequence>
<proteinExistence type="inferred from homology"/>
<protein>
    <recommendedName>
        <fullName evidence="1">tRNA(Met) cytidine acetate ligase</fullName>
        <ecNumber evidence="1">6.3.4.-</ecNumber>
    </recommendedName>
</protein>
<accession>Q9CIX6</accession>
<feature type="chain" id="PRO_0000147169" description="tRNA(Met) cytidine acetate ligase">
    <location>
        <begin position="1"/>
        <end position="389"/>
    </location>
</feature>
<feature type="binding site" evidence="1">
    <location>
        <begin position="8"/>
        <end position="21"/>
    </location>
    <ligand>
        <name>ATP</name>
        <dbReference type="ChEBI" id="CHEBI:30616"/>
    </ligand>
</feature>
<feature type="binding site" evidence="1">
    <location>
        <position position="97"/>
    </location>
    <ligand>
        <name>ATP</name>
        <dbReference type="ChEBI" id="CHEBI:30616"/>
    </ligand>
</feature>
<feature type="binding site" evidence="1">
    <location>
        <position position="153"/>
    </location>
    <ligand>
        <name>ATP</name>
        <dbReference type="ChEBI" id="CHEBI:30616"/>
    </ligand>
</feature>
<feature type="binding site" evidence="1">
    <location>
        <position position="176"/>
    </location>
    <ligand>
        <name>ATP</name>
        <dbReference type="ChEBI" id="CHEBI:30616"/>
    </ligand>
</feature>
<organism>
    <name type="scientific">Lactococcus lactis subsp. lactis (strain IL1403)</name>
    <name type="common">Streptococcus lactis</name>
    <dbReference type="NCBI Taxonomy" id="272623"/>
    <lineage>
        <taxon>Bacteria</taxon>
        <taxon>Bacillati</taxon>
        <taxon>Bacillota</taxon>
        <taxon>Bacilli</taxon>
        <taxon>Lactobacillales</taxon>
        <taxon>Streptococcaceae</taxon>
        <taxon>Lactococcus</taxon>
    </lineage>
</organism>